<comment type="function">
    <text evidence="1">Is involved in L-lactate degradation and allows cells to grow with lactate as the sole carbon source.</text>
</comment>
<comment type="similarity">
    <text evidence="1">Belongs to the LutC/YkgG family.</text>
</comment>
<gene>
    <name evidence="1" type="primary">lutC</name>
    <name type="ordered locus">BH1834</name>
</gene>
<reference key="1">
    <citation type="journal article" date="2000" name="Nucleic Acids Res.">
        <title>Complete genome sequence of the alkaliphilic bacterium Bacillus halodurans and genomic sequence comparison with Bacillus subtilis.</title>
        <authorList>
            <person name="Takami H."/>
            <person name="Nakasone K."/>
            <person name="Takaki Y."/>
            <person name="Maeno G."/>
            <person name="Sasaki R."/>
            <person name="Masui N."/>
            <person name="Fuji F."/>
            <person name="Hirama C."/>
            <person name="Nakamura Y."/>
            <person name="Ogasawara N."/>
            <person name="Kuhara S."/>
            <person name="Horikoshi K."/>
        </authorList>
    </citation>
    <scope>NUCLEOTIDE SEQUENCE [LARGE SCALE GENOMIC DNA]</scope>
    <source>
        <strain>ATCC BAA-125 / DSM 18197 / FERM 7344 / JCM 9153 / C-125</strain>
    </source>
</reference>
<name>LUTC_HALH5</name>
<organism>
    <name type="scientific">Halalkalibacterium halodurans (strain ATCC BAA-125 / DSM 18197 / FERM 7344 / JCM 9153 / C-125)</name>
    <name type="common">Bacillus halodurans</name>
    <dbReference type="NCBI Taxonomy" id="272558"/>
    <lineage>
        <taxon>Bacteria</taxon>
        <taxon>Bacillati</taxon>
        <taxon>Bacillota</taxon>
        <taxon>Bacilli</taxon>
        <taxon>Bacillales</taxon>
        <taxon>Bacillaceae</taxon>
        <taxon>Halalkalibacterium (ex Joshi et al. 2022)</taxon>
    </lineage>
</organism>
<protein>
    <recommendedName>
        <fullName evidence="1">Lactate utilization protein C</fullName>
    </recommendedName>
</protein>
<feature type="chain" id="PRO_0000384003" description="Lactate utilization protein C">
    <location>
        <begin position="1"/>
        <end position="230"/>
    </location>
</feature>
<keyword id="KW-1185">Reference proteome</keyword>
<evidence type="ECO:0000255" key="1">
    <source>
        <dbReference type="HAMAP-Rule" id="MF_02104"/>
    </source>
</evidence>
<dbReference type="EMBL" id="BA000004">
    <property type="protein sequence ID" value="BAB05553.1"/>
    <property type="molecule type" value="Genomic_DNA"/>
</dbReference>
<dbReference type="PIR" id="B83879">
    <property type="entry name" value="B83879"/>
</dbReference>
<dbReference type="RefSeq" id="WP_010897995.1">
    <property type="nucleotide sequence ID" value="NC_002570.2"/>
</dbReference>
<dbReference type="SMR" id="Q9KBU0"/>
<dbReference type="STRING" id="272558.gene:10727732"/>
<dbReference type="KEGG" id="bha:BH1834"/>
<dbReference type="eggNOG" id="COG1556">
    <property type="taxonomic scope" value="Bacteria"/>
</dbReference>
<dbReference type="HOGENOM" id="CLU_090664_1_0_9"/>
<dbReference type="OrthoDB" id="9794157at2"/>
<dbReference type="Proteomes" id="UP000001258">
    <property type="component" value="Chromosome"/>
</dbReference>
<dbReference type="GO" id="GO:0006089">
    <property type="term" value="P:lactate metabolic process"/>
    <property type="evidence" value="ECO:0007669"/>
    <property type="project" value="UniProtKB-UniRule"/>
</dbReference>
<dbReference type="Gene3D" id="3.40.50.10420">
    <property type="entry name" value="NagB/RpiA/CoA transferase-like"/>
    <property type="match status" value="1"/>
</dbReference>
<dbReference type="HAMAP" id="MF_02104">
    <property type="entry name" value="LutC"/>
    <property type="match status" value="1"/>
</dbReference>
<dbReference type="InterPro" id="IPR024185">
    <property type="entry name" value="FTHF_cligase-like_sf"/>
</dbReference>
<dbReference type="InterPro" id="IPR003741">
    <property type="entry name" value="LUD_dom"/>
</dbReference>
<dbReference type="InterPro" id="IPR022823">
    <property type="entry name" value="LutC"/>
</dbReference>
<dbReference type="InterPro" id="IPR037171">
    <property type="entry name" value="NagB/RpiA_transferase-like"/>
</dbReference>
<dbReference type="PANTHER" id="PTHR43682">
    <property type="entry name" value="LACTATE UTILIZATION PROTEIN C"/>
    <property type="match status" value="1"/>
</dbReference>
<dbReference type="PANTHER" id="PTHR43682:SF1">
    <property type="entry name" value="LACTATE UTILIZATION PROTEIN C"/>
    <property type="match status" value="1"/>
</dbReference>
<dbReference type="Pfam" id="PF02589">
    <property type="entry name" value="LUD_dom"/>
    <property type="match status" value="1"/>
</dbReference>
<dbReference type="SUPFAM" id="SSF100950">
    <property type="entry name" value="NagB/RpiA/CoA transferase-like"/>
    <property type="match status" value="1"/>
</dbReference>
<accession>Q9KBU0</accession>
<proteinExistence type="inferred from homology"/>
<sequence length="230" mass="25890">MIQRRETFLNNVAEKLGRGRRTAGVKRPDYTVKPQFEVMKEHSSDQLVNVLSEQCTKIHTDVKQTKVDRLEQAIDNVLEEYSARNVITWNDPRFDQFGLTSFLQREQVEVWDHTEGERLVEKAEQADIGITFADYTLAESGTVVLLSGNGKGRSVSLLPTYYIAIIPKSTLVPRMSQVTRELHLKAASGERLPSCINFISGPSNSADIEMNLVVGVHGPIRACYIVVEDR</sequence>